<proteinExistence type="evidence at transcript level"/>
<sequence>MATETKLSQMEEFIRAFLEIDADSNEMIDKQELIKYCQKYRLDMKLIDPWIARFDTDKDNKISIEEFCRGFGLKVSEIRREKDELKKERDGKFPKLPPNIEIIAATMSKTKQYEICCQFKEYVDNTSRTGNDMREVANKMKSLLDNTYGRVWQVVLLTGSYWMNFSHEPFLSIQFKYNNYVCLAWRTPSQ</sequence>
<protein>
    <recommendedName>
        <fullName evidence="5">Tegument antigen</fullName>
    </recommendedName>
    <alternativeName>
        <fullName evidence="5">Antigen SmA22.6</fullName>
    </alternativeName>
    <alternativeName>
        <fullName evidence="5">I(H)A</fullName>
    </alternativeName>
    <alternativeName>
        <fullName evidence="2">Sm22.6</fullName>
    </alternativeName>
    <alternativeName>
        <fullName evidence="4">Tegumental-allergen-like protein-1</fullName>
        <shortName evidence="4">SmTAL1</shortName>
        <shortName evidence="4">TAL1</shortName>
    </alternativeName>
</protein>
<organism>
    <name type="scientific">Schistosoma mansoni</name>
    <name type="common">Blood fluke</name>
    <dbReference type="NCBI Taxonomy" id="6183"/>
    <lineage>
        <taxon>Eukaryota</taxon>
        <taxon>Metazoa</taxon>
        <taxon>Spiralia</taxon>
        <taxon>Lophotrochozoa</taxon>
        <taxon>Platyhelminthes</taxon>
        <taxon>Trematoda</taxon>
        <taxon>Digenea</taxon>
        <taxon>Strigeidida</taxon>
        <taxon>Schistosomatoidea</taxon>
        <taxon>Schistosomatidae</taxon>
        <taxon>Schistosoma</taxon>
    </lineage>
</organism>
<keyword id="KW-0106">Calcium</keyword>
<keyword id="KW-0479">Metal-binding</keyword>
<keyword id="KW-1185">Reference proteome</keyword>
<keyword id="KW-0677">Repeat</keyword>
<evidence type="ECO:0000255" key="1">
    <source>
        <dbReference type="PROSITE-ProRule" id="PRU00448"/>
    </source>
</evidence>
<evidence type="ECO:0000303" key="2">
    <source>
    </source>
</evidence>
<evidence type="ECO:0000303" key="3">
    <source>
    </source>
</evidence>
<evidence type="ECO:0000303" key="4">
    <source>
    </source>
</evidence>
<evidence type="ECO:0000303" key="5">
    <source>
    </source>
</evidence>
<gene>
    <name evidence="2" type="primary">A12</name>
    <name evidence="3" type="ORF">Smp_045200</name>
</gene>
<accession>P14202</accession>
<accession>Q4TTW6</accession>
<reference key="1">
    <citation type="journal article" date="1986" name="Mol. Biochem. Parasitol.">
        <title>Cloning of a developmentally regulated tegument antigen of Schistosoma mansoni.</title>
        <authorList>
            <person name="Stein L.D."/>
            <person name="David J.R."/>
        </authorList>
    </citation>
    <scope>NUCLEOTIDE SEQUENCE [MRNA]</scope>
    <source>
        <strain>Puerto Rican</strain>
    </source>
</reference>
<reference key="2">
    <citation type="journal article" date="1991" name="Mol. Biochem. Parasitol.">
        <title>Molecular cloning and characterisation of the 22-kilodalton adult Schistosoma mansoni antigen recognised by antibodies from mice protectively vaccinated with isolated tegumental surface membranes.</title>
        <authorList>
            <person name="Jeffs S.A."/>
            <person name="Hagan P."/>
            <person name="Allen R."/>
            <person name="Correa-Oliveira R."/>
            <person name="Smithers S.R."/>
            <person name="Simpson A.J.G."/>
        </authorList>
    </citation>
    <scope>NUCLEOTIDE SEQUENCE [MRNA]</scope>
</reference>
<reference key="3">
    <citation type="journal article" date="2006" name="Immunobiology">
        <title>Immunization with Schistosoma mansoni 22.6 kDa antigen induces partial protection against experimental infection in a recombinant protein form but not as DNA vaccine.</title>
        <authorList>
            <person name="Pacifico L.G."/>
            <person name="Fonseca C.T."/>
            <person name="Chiari L."/>
            <person name="Oliveira S.C."/>
        </authorList>
    </citation>
    <scope>NUCLEOTIDE SEQUENCE [MRNA]</scope>
    <source>
        <strain>NMRI</strain>
    </source>
</reference>
<reference key="4">
    <citation type="submission" date="2011-10" db="EMBL/GenBank/DDBJ databases">
        <title>A systematically improved high quality genome and transcriptome of the human blood fluke Schistosoma mansoni.</title>
        <authorList>
            <person name="Protasio A.V."/>
            <person name="Tsai J.I."/>
            <person name="Babbage A."/>
            <person name="Nichol S."/>
            <person name="Hunt M."/>
            <person name="de Silva N."/>
            <person name="Anderson T.J.C."/>
            <person name="Clark R.C."/>
            <person name="Davidson C."/>
            <person name="Dillon G.P."/>
            <person name="Holroyd N."/>
            <person name="LoVerde P.T."/>
            <person name="Lloyd C."/>
            <person name="McQuillan J."/>
            <person name="Oliveira G."/>
            <person name="Otto T.D."/>
            <person name="Parker-Manuel S.J."/>
            <person name="Quail M.A."/>
            <person name="Wilson A."/>
            <person name="Zerlotini A."/>
            <person name="Dunne D.W."/>
            <person name="Berriman M."/>
        </authorList>
    </citation>
    <scope>NUCLEOTIDE SEQUENCE [GENOMIC DNA]</scope>
    <source>
        <strain>Puerto Rican</strain>
    </source>
</reference>
<reference key="5">
    <citation type="journal article" date="2012" name="PLoS Negl. Trop. Dis.">
        <title>A systematically improved high quality genome and transcriptome of the human blood fluke Schistosoma mansoni.</title>
        <authorList>
            <person name="Protasio A.V."/>
            <person name="Tsai I.J."/>
            <person name="Babbage A."/>
            <person name="Nichol S."/>
            <person name="Hunt M."/>
            <person name="Aslett M.A."/>
            <person name="De Silva N."/>
            <person name="Velarde G.S."/>
            <person name="Anderson T.J."/>
            <person name="Clark R.C."/>
            <person name="Davidson C."/>
            <person name="Dillon G.P."/>
            <person name="Holroyd N.E."/>
            <person name="LoVerde P.T."/>
            <person name="Lloyd C."/>
            <person name="McQuillan J."/>
            <person name="Oliveira G."/>
            <person name="Otto T.D."/>
            <person name="Parker-Manuel S.J."/>
            <person name="Quail M.A."/>
            <person name="Wilson R.A."/>
            <person name="Zerlotini A."/>
            <person name="Dunne D.W."/>
            <person name="Berriman M."/>
        </authorList>
    </citation>
    <scope>NUCLEOTIDE SEQUENCE [LARGE SCALE GENOMIC DNA]</scope>
    <source>
        <strain>Puerto Rican</strain>
    </source>
</reference>
<reference key="6">
    <citation type="journal article" date="2012" name="PLoS Negl. Trop. Dis.">
        <title>The Schistosoma mansoni tegumental-allergen-like (TAL) protein family: influence of developmental expression on human IgE responses.</title>
        <authorList>
            <person name="Fitzsimmons C.M."/>
            <person name="Jones F.M."/>
            <person name="Stearn A."/>
            <person name="Chalmers I.W."/>
            <person name="Hoffmann K.F."/>
            <person name="Wawrzyniak J."/>
            <person name="Wilson S."/>
            <person name="Kabatereine N.B."/>
            <person name="Dunne D.W."/>
        </authorList>
    </citation>
    <scope>NOMENCLATURE</scope>
</reference>
<feature type="chain" id="PRO_0000073858" description="Tegument antigen">
    <location>
        <begin position="1"/>
        <end position="190"/>
    </location>
</feature>
<feature type="domain" description="EF-hand 1" evidence="1">
    <location>
        <begin position="8"/>
        <end position="43"/>
    </location>
</feature>
<feature type="domain" description="EF-hand 2" evidence="1">
    <location>
        <begin position="51"/>
        <end position="77"/>
    </location>
</feature>
<feature type="binding site" evidence="1">
    <location>
        <position position="55"/>
    </location>
    <ligand>
        <name>Ca(2+)</name>
        <dbReference type="ChEBI" id="CHEBI:29108"/>
    </ligand>
</feature>
<feature type="binding site" evidence="1">
    <location>
        <position position="57"/>
    </location>
    <ligand>
        <name>Ca(2+)</name>
        <dbReference type="ChEBI" id="CHEBI:29108"/>
    </ligand>
</feature>
<feature type="binding site" evidence="1">
    <location>
        <position position="59"/>
    </location>
    <ligand>
        <name>Ca(2+)</name>
        <dbReference type="ChEBI" id="CHEBI:29108"/>
    </ligand>
</feature>
<feature type="binding site" evidence="1">
    <location>
        <position position="61"/>
    </location>
    <ligand>
        <name>Ca(2+)</name>
        <dbReference type="ChEBI" id="CHEBI:29108"/>
    </ligand>
</feature>
<feature type="binding site" evidence="1">
    <location>
        <position position="66"/>
    </location>
    <ligand>
        <name>Ca(2+)</name>
        <dbReference type="ChEBI" id="CHEBI:29108"/>
    </ligand>
</feature>
<dbReference type="EMBL" id="M29837">
    <property type="protein sequence ID" value="AAA29856.1"/>
    <property type="molecule type" value="mRNA"/>
</dbReference>
<dbReference type="EMBL" id="M37003">
    <property type="protein sequence ID" value="AAA29922.1"/>
    <property type="molecule type" value="mRNA"/>
</dbReference>
<dbReference type="EMBL" id="DQ059818">
    <property type="protein sequence ID" value="AAY57921.1"/>
    <property type="molecule type" value="mRNA"/>
</dbReference>
<dbReference type="EMBL" id="HE601631">
    <property type="protein sequence ID" value="CCD81561.1"/>
    <property type="molecule type" value="Genomic_DNA"/>
</dbReference>
<dbReference type="PIR" id="A45601">
    <property type="entry name" value="A45601"/>
</dbReference>
<dbReference type="PIR" id="A54518">
    <property type="entry name" value="A54518"/>
</dbReference>
<dbReference type="RefSeq" id="XP_018654157.1">
    <property type="nucleotide sequence ID" value="XM_018788634.1"/>
</dbReference>
<dbReference type="SMR" id="P14202"/>
<dbReference type="STRING" id="6183.P14202"/>
<dbReference type="EnsemblMetazoa" id="Smp_045200.1">
    <property type="protein sequence ID" value="Smp_045200.1"/>
    <property type="gene ID" value="Smp_045200"/>
</dbReference>
<dbReference type="EnsemblMetazoa" id="Smp_045200.2">
    <property type="protein sequence ID" value="Smp_045200.2"/>
    <property type="gene ID" value="Smp_045200"/>
</dbReference>
<dbReference type="GeneID" id="8350544"/>
<dbReference type="KEGG" id="smm:Smp_045200"/>
<dbReference type="WBParaSite" id="Smp_045200.1">
    <property type="protein sequence ID" value="Smp_045200.1"/>
    <property type="gene ID" value="Smp_045200"/>
</dbReference>
<dbReference type="CTD" id="8350544"/>
<dbReference type="HOGENOM" id="CLU_1557207_0_0_1"/>
<dbReference type="InParanoid" id="P14202"/>
<dbReference type="OrthoDB" id="26525at2759"/>
<dbReference type="PhylomeDB" id="P14202"/>
<dbReference type="Proteomes" id="UP000008854">
    <property type="component" value="Unassembled WGS sequence"/>
</dbReference>
<dbReference type="GO" id="GO:0030286">
    <property type="term" value="C:dynein complex"/>
    <property type="evidence" value="ECO:0007669"/>
    <property type="project" value="InterPro"/>
</dbReference>
<dbReference type="GO" id="GO:0005509">
    <property type="term" value="F:calcium ion binding"/>
    <property type="evidence" value="ECO:0007669"/>
    <property type="project" value="InterPro"/>
</dbReference>
<dbReference type="GO" id="GO:0007017">
    <property type="term" value="P:microtubule-based process"/>
    <property type="evidence" value="ECO:0007669"/>
    <property type="project" value="InterPro"/>
</dbReference>
<dbReference type="CDD" id="cd21454">
    <property type="entry name" value="DLC-like_TAL"/>
    <property type="match status" value="1"/>
</dbReference>
<dbReference type="CDD" id="cd00051">
    <property type="entry name" value="EFh"/>
    <property type="match status" value="1"/>
</dbReference>
<dbReference type="Gene3D" id="1.10.238.10">
    <property type="entry name" value="EF-hand"/>
    <property type="match status" value="1"/>
</dbReference>
<dbReference type="Gene3D" id="3.30.740.10">
    <property type="entry name" value="Protein Inhibitor Of Neuronal Nitric Oxide Synthase"/>
    <property type="match status" value="1"/>
</dbReference>
<dbReference type="InterPro" id="IPR037177">
    <property type="entry name" value="DLC_sf"/>
</dbReference>
<dbReference type="InterPro" id="IPR001372">
    <property type="entry name" value="Dynein_light_chain_typ-1/2"/>
</dbReference>
<dbReference type="InterPro" id="IPR011992">
    <property type="entry name" value="EF-hand-dom_pair"/>
</dbReference>
<dbReference type="InterPro" id="IPR018247">
    <property type="entry name" value="EF_Hand_1_Ca_BS"/>
</dbReference>
<dbReference type="InterPro" id="IPR002048">
    <property type="entry name" value="EF_hand_dom"/>
</dbReference>
<dbReference type="Pfam" id="PF01221">
    <property type="entry name" value="Dynein_light"/>
    <property type="match status" value="1"/>
</dbReference>
<dbReference type="Pfam" id="PF13499">
    <property type="entry name" value="EF-hand_7"/>
    <property type="match status" value="1"/>
</dbReference>
<dbReference type="SMART" id="SM01375">
    <property type="entry name" value="Dynein_light"/>
    <property type="match status" value="1"/>
</dbReference>
<dbReference type="SMART" id="SM00054">
    <property type="entry name" value="EFh"/>
    <property type="match status" value="2"/>
</dbReference>
<dbReference type="SUPFAM" id="SSF54648">
    <property type="entry name" value="DLC"/>
    <property type="match status" value="1"/>
</dbReference>
<dbReference type="SUPFAM" id="SSF47473">
    <property type="entry name" value="EF-hand"/>
    <property type="match status" value="1"/>
</dbReference>
<dbReference type="PROSITE" id="PS00018">
    <property type="entry name" value="EF_HAND_1"/>
    <property type="match status" value="1"/>
</dbReference>
<dbReference type="PROSITE" id="PS50222">
    <property type="entry name" value="EF_HAND_2"/>
    <property type="match status" value="2"/>
</dbReference>
<name>TEGU_SCHMA</name>
<comment type="tissue specificity">
    <text>Adult and schistosomula tegument.</text>
</comment>
<comment type="developmental stage">
    <text>This antigen occurs in adults and sporocysts but not in cercariae, eggs or newly transformed schistosomula. It is a developmentally regulated protein.</text>
</comment>